<dbReference type="EMBL" id="CR859620">
    <property type="protein sequence ID" value="CAH91782.1"/>
    <property type="molecule type" value="mRNA"/>
</dbReference>
<dbReference type="SMR" id="Q5R8X8"/>
<dbReference type="STRING" id="9601.ENSPPYP00000024289"/>
<dbReference type="eggNOG" id="KOG3223">
    <property type="taxonomic scope" value="Eukaryota"/>
</dbReference>
<dbReference type="InParanoid" id="Q5R8X8"/>
<dbReference type="Proteomes" id="UP000001595">
    <property type="component" value="Unplaced"/>
</dbReference>
<dbReference type="GO" id="GO:0005813">
    <property type="term" value="C:centrosome"/>
    <property type="evidence" value="ECO:0007669"/>
    <property type="project" value="UniProtKB-SubCell"/>
</dbReference>
<dbReference type="GO" id="GO:0005737">
    <property type="term" value="C:cytoplasm"/>
    <property type="evidence" value="ECO:0007669"/>
    <property type="project" value="UniProtKB-KW"/>
</dbReference>
<dbReference type="GO" id="GO:0030496">
    <property type="term" value="C:midbody"/>
    <property type="evidence" value="ECO:0007669"/>
    <property type="project" value="UniProtKB-SubCell"/>
</dbReference>
<dbReference type="GO" id="GO:0005634">
    <property type="term" value="C:nucleus"/>
    <property type="evidence" value="ECO:0007669"/>
    <property type="project" value="TreeGrafter"/>
</dbReference>
<dbReference type="GO" id="GO:0003713">
    <property type="term" value="F:transcription coactivator activity"/>
    <property type="evidence" value="ECO:0007669"/>
    <property type="project" value="TreeGrafter"/>
</dbReference>
<dbReference type="GO" id="GO:0051301">
    <property type="term" value="P:cell division"/>
    <property type="evidence" value="ECO:0007669"/>
    <property type="project" value="UniProtKB-KW"/>
</dbReference>
<dbReference type="GO" id="GO:0006366">
    <property type="term" value="P:transcription by RNA polymerase II"/>
    <property type="evidence" value="ECO:0007669"/>
    <property type="project" value="TreeGrafter"/>
</dbReference>
<dbReference type="InterPro" id="IPR010422">
    <property type="entry name" value="Ccdc124/Oxs1"/>
</dbReference>
<dbReference type="InterPro" id="IPR054414">
    <property type="entry name" value="Ccdc124/Oxs1_C"/>
</dbReference>
<dbReference type="PANTHER" id="PTHR21680">
    <property type="entry name" value="COILED-COIL DOMAIN-CONTAINING PROTEIN 124"/>
    <property type="match status" value="1"/>
</dbReference>
<dbReference type="PANTHER" id="PTHR21680:SF0">
    <property type="entry name" value="COILED-COIL DOMAIN-CONTAINING PROTEIN 124"/>
    <property type="match status" value="1"/>
</dbReference>
<dbReference type="Pfam" id="PF06244">
    <property type="entry name" value="Ccdc124"/>
    <property type="match status" value="1"/>
</dbReference>
<protein>
    <recommendedName>
        <fullName>Coiled-coil domain-containing protein 124</fullName>
    </recommendedName>
</protein>
<keyword id="KW-0131">Cell cycle</keyword>
<keyword id="KW-0132">Cell division</keyword>
<keyword id="KW-0175">Coiled coil</keyword>
<keyword id="KW-0963">Cytoplasm</keyword>
<keyword id="KW-0206">Cytoskeleton</keyword>
<keyword id="KW-0597">Phosphoprotein</keyword>
<keyword id="KW-1185">Reference proteome</keyword>
<sequence length="223" mass="25816">MPKKFQGENTKSAAARARRAEAKAAADAKKQKEPEDAYWKDDDKHVMRKEQRKEEKEKRRLDQLERKKETQRLLEEEDSKLKGGKAPRVATSSKVTRAQIEDTLRRDHQLREAPDTAEKAKSHLEVPLEENVNRRVLEEGSVEARTIEDAIAVLSVAEEAADRHPERRQRAAFTAFEEAQLPRLKQENPNMRLSQLKQLLKKEWLRSPDNPMNQRAVPFNAPK</sequence>
<feature type="chain" id="PRO_0000263737" description="Coiled-coil domain-containing protein 124">
    <location>
        <begin position="1"/>
        <end position="223"/>
    </location>
</feature>
<feature type="region of interest" description="Disordered" evidence="3">
    <location>
        <begin position="1"/>
        <end position="126"/>
    </location>
</feature>
<feature type="region of interest" description="Disordered" evidence="3">
    <location>
        <begin position="204"/>
        <end position="223"/>
    </location>
</feature>
<feature type="coiled-coil region" evidence="2">
    <location>
        <begin position="44"/>
        <end position="82"/>
    </location>
</feature>
<feature type="compositionally biased region" description="Basic and acidic residues" evidence="3">
    <location>
        <begin position="18"/>
        <end position="74"/>
    </location>
</feature>
<feature type="compositionally biased region" description="Basic and acidic residues" evidence="3">
    <location>
        <begin position="99"/>
        <end position="126"/>
    </location>
</feature>
<feature type="modified residue" description="Phosphoserine" evidence="1">
    <location>
        <position position="141"/>
    </location>
</feature>
<feature type="modified residue" description="Phosphoserine" evidence="1">
    <location>
        <position position="194"/>
    </location>
</feature>
<name>CC124_PONAB</name>
<accession>Q5R8X8</accession>
<reference key="1">
    <citation type="submission" date="2004-11" db="EMBL/GenBank/DDBJ databases">
        <authorList>
            <consortium name="The German cDNA consortium"/>
        </authorList>
    </citation>
    <scope>NUCLEOTIDE SEQUENCE [LARGE SCALE MRNA]</scope>
    <source>
        <tissue>Brain cortex</tissue>
    </source>
</reference>
<gene>
    <name type="primary">CCDC124</name>
</gene>
<proteinExistence type="evidence at transcript level"/>
<evidence type="ECO:0000250" key="1">
    <source>
        <dbReference type="UniProtKB" id="Q96CT7"/>
    </source>
</evidence>
<evidence type="ECO:0000255" key="2"/>
<evidence type="ECO:0000256" key="3">
    <source>
        <dbReference type="SAM" id="MobiDB-lite"/>
    </source>
</evidence>
<evidence type="ECO:0000305" key="4"/>
<comment type="function">
    <text evidence="1">Ribosome-binding protein involved in ribosome hibernation: associates with translationally inactive ribosomes and stabilizes the nonrotated conformation of the 80S ribosome, thereby promoting ribosome preservation and storage. Also required for proper progression of late cytokinetic stages.</text>
</comment>
<comment type="subunit">
    <text evidence="1">Associates with translationally inactive ribosomes in the nonrotated state. Interacts with RASGEF1B.</text>
</comment>
<comment type="subcellular location">
    <subcellularLocation>
        <location evidence="1">Cytoplasm</location>
        <location evidence="1">Cytoskeleton</location>
        <location evidence="1">Microtubule organizing center</location>
        <location evidence="1">Centrosome</location>
    </subcellularLocation>
    <subcellularLocation>
        <location evidence="1">Midbody</location>
    </subcellularLocation>
    <text evidence="1">Colocalizes with gamma-tubulin at interphase, prophase, metaphase, and anaphase. Relocates from centrosome to midbody at telophase.</text>
</comment>
<comment type="similarity">
    <text evidence="4">Belongs to the CCDC124 family.</text>
</comment>
<organism>
    <name type="scientific">Pongo abelii</name>
    <name type="common">Sumatran orangutan</name>
    <name type="synonym">Pongo pygmaeus abelii</name>
    <dbReference type="NCBI Taxonomy" id="9601"/>
    <lineage>
        <taxon>Eukaryota</taxon>
        <taxon>Metazoa</taxon>
        <taxon>Chordata</taxon>
        <taxon>Craniata</taxon>
        <taxon>Vertebrata</taxon>
        <taxon>Euteleostomi</taxon>
        <taxon>Mammalia</taxon>
        <taxon>Eutheria</taxon>
        <taxon>Euarchontoglires</taxon>
        <taxon>Primates</taxon>
        <taxon>Haplorrhini</taxon>
        <taxon>Catarrhini</taxon>
        <taxon>Hominidae</taxon>
        <taxon>Pongo</taxon>
    </lineage>
</organism>